<accession>Q2FZW3</accession>
<keyword id="KW-1003">Cell membrane</keyword>
<keyword id="KW-0472">Membrane</keyword>
<keyword id="KW-1185">Reference proteome</keyword>
<keyword id="KW-0735">Signal-anchor</keyword>
<keyword id="KW-0812">Transmembrane</keyword>
<keyword id="KW-1133">Transmembrane helix</keyword>
<proteinExistence type="evidence at protein level"/>
<sequence length="391" mass="44946">MKLKPFLPILISGAVFIVFLLLPASWFTGLVNEKTVEDNRTSLTDQVLKGTLIQDKLYESNKYYPIYGSSELGKDDPFNPAIALNKHNANKKAFLLGAGGSTDLINAVELASQYDKLKGKKLTFIISPQWFTNHGLTNQNFDARMSQTQINQMFQQKNMSTELKRRYAQRLLQFPHVHNKEYLKSYAKNPKETKDSYISGFKENQLIKIEAIKSLFAMDKSPLEHVKPATKPDASWDEMKQKAVEIGKADTTSNKFGIRDQYWKLIQESKRKVRRDYEFNVNSPEFQDLELLVKTMRAAGADVQYVSIPSNGVWYDHIGIDKERRQAVYKKIHSTVVDNGGKIYDMTDKDYEKYVISDAVHIGWKGWVYMDEQIAKHMKGEPQPEVDKPKN</sequence>
<evidence type="ECO:0000250" key="1">
    <source>
        <dbReference type="UniProtKB" id="P39578"/>
    </source>
</evidence>
<evidence type="ECO:0000255" key="2"/>
<evidence type="ECO:0000269" key="3">
    <source>
    </source>
</evidence>
<evidence type="ECO:0000305" key="4"/>
<evidence type="ECO:0000305" key="5">
    <source>
    </source>
</evidence>
<protein>
    <recommendedName>
        <fullName>Protein DltD</fullName>
    </recommendedName>
</protein>
<comment type="function">
    <text evidence="1">Involved in the D-alanylation of lipoteichoic acid (LTA). Could be responsible for the transfer of DltC-carried D-alanyl groups to cell membrane phosphatidylglycerol (PG), or alternatively of D-alanine residues from D-Ala-undecaprenol phosphate to the poly(glycerophosphate) chains of LTA. D-alanylation of LTA plays an important role in modulating the properties of the cell wall in Gram-positive bacteria, influencing the net charge of the cell wall.</text>
</comment>
<comment type="pathway">
    <text evidence="1">Cell wall biogenesis; lipoteichoic acid biosynthesis.</text>
</comment>
<comment type="subcellular location">
    <subcellularLocation>
        <location evidence="3">Cell membrane</location>
        <topology evidence="2">Single-pass type II membrane protein</topology>
        <orientation evidence="3">Extracellular side</orientation>
    </subcellularLocation>
</comment>
<comment type="similarity">
    <text evidence="4">Belongs to the DltD family.</text>
</comment>
<name>DLTD_STAA8</name>
<organism>
    <name type="scientific">Staphylococcus aureus (strain NCTC 8325 / PS 47)</name>
    <dbReference type="NCBI Taxonomy" id="93061"/>
    <lineage>
        <taxon>Bacteria</taxon>
        <taxon>Bacillati</taxon>
        <taxon>Bacillota</taxon>
        <taxon>Bacilli</taxon>
        <taxon>Bacillales</taxon>
        <taxon>Staphylococcaceae</taxon>
        <taxon>Staphylococcus</taxon>
    </lineage>
</organism>
<feature type="chain" id="PRO_0000442352" description="Protein DltD">
    <location>
        <begin position="1"/>
        <end position="391"/>
    </location>
</feature>
<feature type="topological domain" description="Cytoplasmic" evidence="5">
    <location>
        <begin position="1"/>
        <end position="5"/>
    </location>
</feature>
<feature type="transmembrane region" description="Helical; Signal-anchor for type II membrane protein" evidence="2">
    <location>
        <begin position="6"/>
        <end position="26"/>
    </location>
</feature>
<feature type="topological domain" description="Extracellular" evidence="3">
    <location>
        <begin position="27"/>
        <end position="391"/>
    </location>
</feature>
<dbReference type="EMBL" id="CP000253">
    <property type="protein sequence ID" value="ABD29997.1"/>
    <property type="molecule type" value="Genomic_DNA"/>
</dbReference>
<dbReference type="RefSeq" id="WP_000769416.1">
    <property type="nucleotide sequence ID" value="NZ_LS483365.1"/>
</dbReference>
<dbReference type="RefSeq" id="YP_499425.1">
    <property type="nucleotide sequence ID" value="NC_007795.1"/>
</dbReference>
<dbReference type="SMR" id="Q2FZW3"/>
<dbReference type="STRING" id="93061.SAOUHSC_00872"/>
<dbReference type="PaxDb" id="1280-SAXN108_0930"/>
<dbReference type="GeneID" id="3919219"/>
<dbReference type="KEGG" id="sao:SAOUHSC_00872"/>
<dbReference type="PATRIC" id="fig|93061.5.peg.792"/>
<dbReference type="eggNOG" id="COG3966">
    <property type="taxonomic scope" value="Bacteria"/>
</dbReference>
<dbReference type="HOGENOM" id="CLU_050505_1_0_9"/>
<dbReference type="OrthoDB" id="1700484at2"/>
<dbReference type="BioCyc" id="MetaCyc:MONOMER-19992"/>
<dbReference type="UniPathway" id="UPA00556"/>
<dbReference type="Proteomes" id="UP000008816">
    <property type="component" value="Chromosome"/>
</dbReference>
<dbReference type="GO" id="GO:0005886">
    <property type="term" value="C:plasma membrane"/>
    <property type="evidence" value="ECO:0007669"/>
    <property type="project" value="UniProtKB-SubCell"/>
</dbReference>
<dbReference type="GO" id="GO:0070395">
    <property type="term" value="P:lipoteichoic acid biosynthetic process"/>
    <property type="evidence" value="ECO:0007669"/>
    <property type="project" value="UniProtKB-UniPathway"/>
</dbReference>
<dbReference type="GO" id="GO:0141179">
    <property type="term" value="P:symbiont-mediated evasion of recognition by host antimicrobial peptide"/>
    <property type="evidence" value="ECO:0000269"/>
    <property type="project" value="SigSci"/>
</dbReference>
<dbReference type="InterPro" id="IPR006998">
    <property type="entry name" value="DltD"/>
</dbReference>
<dbReference type="InterPro" id="IPR023896">
    <property type="entry name" value="LTA_DltD"/>
</dbReference>
<dbReference type="NCBIfam" id="TIGR04092">
    <property type="entry name" value="LTA_DltD"/>
    <property type="match status" value="1"/>
</dbReference>
<dbReference type="PANTHER" id="PTHR40039">
    <property type="entry name" value="PROTEIN DLTD"/>
    <property type="match status" value="1"/>
</dbReference>
<dbReference type="PANTHER" id="PTHR40039:SF1">
    <property type="entry name" value="PROTEIN DLTD"/>
    <property type="match status" value="1"/>
</dbReference>
<dbReference type="Pfam" id="PF04914">
    <property type="entry name" value="DltD"/>
    <property type="match status" value="1"/>
</dbReference>
<dbReference type="PIRSF" id="PIRSF021438">
    <property type="entry name" value="DltD"/>
    <property type="match status" value="1"/>
</dbReference>
<dbReference type="SUPFAM" id="SSF52266">
    <property type="entry name" value="SGNH hydrolase"/>
    <property type="match status" value="1"/>
</dbReference>
<gene>
    <name type="primary">dltD</name>
    <name type="ordered locus">SAOUHSC_00872</name>
</gene>
<reference key="1">
    <citation type="book" date="2006" name="Gram positive pathogens, 2nd edition">
        <title>The Staphylococcus aureus NCTC 8325 genome.</title>
        <editorList>
            <person name="Fischetti V."/>
            <person name="Novick R."/>
            <person name="Ferretti J."/>
            <person name="Portnoy D."/>
            <person name="Rood J."/>
        </editorList>
        <authorList>
            <person name="Gillaspy A.F."/>
            <person name="Worrell V."/>
            <person name="Orvis J."/>
            <person name="Roe B.A."/>
            <person name="Dyer D.W."/>
            <person name="Iandolo J.J."/>
        </authorList>
    </citation>
    <scope>NUCLEOTIDE SEQUENCE [LARGE SCALE GENOMIC DNA]</scope>
    <source>
        <strain>NCTC 8325 / PS 47</strain>
    </source>
</reference>
<reference key="2">
    <citation type="journal article" date="2013" name="Microbiology">
        <title>Revised mechanism of D-alanine incorporation into cell wall polymers in Gram-positive bacteria.</title>
        <authorList>
            <person name="Reichmann N.T."/>
            <person name="Cassona C.P."/>
            <person name="Gruendling A."/>
        </authorList>
    </citation>
    <scope>SUBCELLULAR LOCATION</scope>
    <scope>TOPOLOGY</scope>
</reference>